<name>PACN2_RAT</name>
<dbReference type="EMBL" id="AF139492">
    <property type="protein sequence ID" value="AAF22211.1"/>
    <property type="molecule type" value="mRNA"/>
</dbReference>
<dbReference type="EMBL" id="AF139493">
    <property type="protein sequence ID" value="AAF22212.1"/>
    <property type="molecule type" value="mRNA"/>
</dbReference>
<dbReference type="EMBL" id="AF139494">
    <property type="protein sequence ID" value="AAF22213.1"/>
    <property type="molecule type" value="mRNA"/>
</dbReference>
<dbReference type="EMBL" id="AF139495">
    <property type="protein sequence ID" value="AAF22214.1"/>
    <property type="molecule type" value="mRNA"/>
</dbReference>
<dbReference type="RefSeq" id="NP_570096.2">
    <molecule id="Q9QY17-3"/>
    <property type="nucleotide sequence ID" value="NM_130740.2"/>
</dbReference>
<dbReference type="RefSeq" id="XP_006242112.1">
    <property type="nucleotide sequence ID" value="XM_006242050.3"/>
</dbReference>
<dbReference type="RefSeq" id="XP_006242113.1">
    <property type="nucleotide sequence ID" value="XM_006242051.2"/>
</dbReference>
<dbReference type="RefSeq" id="XP_006242114.1">
    <property type="nucleotide sequence ID" value="XM_006242052.3"/>
</dbReference>
<dbReference type="RefSeq" id="XP_006242115.1">
    <property type="nucleotide sequence ID" value="XM_006242053.2"/>
</dbReference>
<dbReference type="RefSeq" id="XP_006242117.1">
    <molecule id="Q9QY17-3"/>
    <property type="nucleotide sequence ID" value="XM_006242055.4"/>
</dbReference>
<dbReference type="RefSeq" id="XP_006242120.1">
    <property type="nucleotide sequence ID" value="XM_006242058.2"/>
</dbReference>
<dbReference type="RefSeq" id="XP_006242122.1">
    <property type="nucleotide sequence ID" value="XM_006242060.2"/>
</dbReference>
<dbReference type="RefSeq" id="XP_017450116.1">
    <property type="nucleotide sequence ID" value="XM_017594627.1"/>
</dbReference>
<dbReference type="RefSeq" id="XP_038934236.1">
    <molecule id="Q9QY17-3"/>
    <property type="nucleotide sequence ID" value="XM_039078308.2"/>
</dbReference>
<dbReference type="RefSeq" id="XP_038934237.1">
    <molecule id="Q9QY17-3"/>
    <property type="nucleotide sequence ID" value="XM_039078309.2"/>
</dbReference>
<dbReference type="RefSeq" id="XP_063118987.1">
    <molecule id="Q9QY17-3"/>
    <property type="nucleotide sequence ID" value="XM_063262917.1"/>
</dbReference>
<dbReference type="RefSeq" id="XP_063118988.1">
    <molecule id="Q9QY17-3"/>
    <property type="nucleotide sequence ID" value="XM_063262918.1"/>
</dbReference>
<dbReference type="RefSeq" id="XP_063118991.1">
    <molecule id="Q9QY17-4"/>
    <property type="nucleotide sequence ID" value="XM_063262921.1"/>
</dbReference>
<dbReference type="RefSeq" id="XP_063118992.1">
    <molecule id="Q9QY17-4"/>
    <property type="nucleotide sequence ID" value="XM_063262922.1"/>
</dbReference>
<dbReference type="RefSeq" id="XP_063118993.1">
    <molecule id="Q9QY17-4"/>
    <property type="nucleotide sequence ID" value="XM_063262923.1"/>
</dbReference>
<dbReference type="SMR" id="Q9QY17"/>
<dbReference type="BioGRID" id="250783">
    <property type="interactions" value="1"/>
</dbReference>
<dbReference type="ELM" id="Q9QY17"/>
<dbReference type="FunCoup" id="Q9QY17">
    <property type="interactions" value="3563"/>
</dbReference>
<dbReference type="IntAct" id="Q9QY17">
    <property type="interactions" value="6"/>
</dbReference>
<dbReference type="MINT" id="Q9QY17"/>
<dbReference type="STRING" id="10116.ENSRNOP00000060074"/>
<dbReference type="iPTMnet" id="Q9QY17"/>
<dbReference type="PhosphoSitePlus" id="Q9QY17"/>
<dbReference type="jPOST" id="Q9QY17"/>
<dbReference type="PaxDb" id="10116-ENSRNOP00000060074"/>
<dbReference type="Ensembl" id="ENSRNOT00000013398.9">
    <molecule id="Q9QY17-4"/>
    <property type="protein sequence ID" value="ENSRNOP00000013398.6"/>
    <property type="gene ID" value="ENSRNOG00000009756.9"/>
</dbReference>
<dbReference type="Ensembl" id="ENSRNOT00000088125.2">
    <molecule id="Q9QY17-3"/>
    <property type="protein sequence ID" value="ENSRNOP00000072822.1"/>
    <property type="gene ID" value="ENSRNOG00000009756.9"/>
</dbReference>
<dbReference type="GeneID" id="124461"/>
<dbReference type="KEGG" id="rno:124461"/>
<dbReference type="AGR" id="RGD:69411"/>
<dbReference type="CTD" id="11252"/>
<dbReference type="RGD" id="69411">
    <property type="gene designation" value="Pacsin2"/>
</dbReference>
<dbReference type="VEuPathDB" id="HostDB:ENSRNOG00000009756"/>
<dbReference type="eggNOG" id="KOG2856">
    <property type="taxonomic scope" value="Eukaryota"/>
</dbReference>
<dbReference type="GeneTree" id="ENSGT00950000182973"/>
<dbReference type="InParanoid" id="Q9QY17"/>
<dbReference type="PhylomeDB" id="Q9QY17"/>
<dbReference type="Reactome" id="R-RNO-8856828">
    <property type="pathway name" value="Clathrin-mediated endocytosis"/>
</dbReference>
<dbReference type="PRO" id="PR:Q9QY17"/>
<dbReference type="Proteomes" id="UP000002494">
    <property type="component" value="Chromosome 7"/>
</dbReference>
<dbReference type="Bgee" id="ENSRNOG00000009756">
    <property type="expression patterns" value="Expressed in stomach and 19 other cell types or tissues"/>
</dbReference>
<dbReference type="ExpressionAtlas" id="Q9QY17">
    <property type="expression patterns" value="baseline and differential"/>
</dbReference>
<dbReference type="GO" id="GO:0005912">
    <property type="term" value="C:adherens junction"/>
    <property type="evidence" value="ECO:0007669"/>
    <property type="project" value="UniProtKB-SubCell"/>
</dbReference>
<dbReference type="GO" id="GO:0005901">
    <property type="term" value="C:caveola"/>
    <property type="evidence" value="ECO:0000266"/>
    <property type="project" value="RGD"/>
</dbReference>
<dbReference type="GO" id="GO:0005911">
    <property type="term" value="C:cell-cell junction"/>
    <property type="evidence" value="ECO:0000266"/>
    <property type="project" value="RGD"/>
</dbReference>
<dbReference type="GO" id="GO:0005737">
    <property type="term" value="C:cytoplasm"/>
    <property type="evidence" value="ECO:0000266"/>
    <property type="project" value="RGD"/>
</dbReference>
<dbReference type="GO" id="GO:0005856">
    <property type="term" value="C:cytoskeleton"/>
    <property type="evidence" value="ECO:0007669"/>
    <property type="project" value="UniProtKB-SubCell"/>
</dbReference>
<dbReference type="GO" id="GO:0005829">
    <property type="term" value="C:cytosol"/>
    <property type="evidence" value="ECO:0000266"/>
    <property type="project" value="RGD"/>
</dbReference>
<dbReference type="GO" id="GO:0005769">
    <property type="term" value="C:early endosome"/>
    <property type="evidence" value="ECO:0007669"/>
    <property type="project" value="UniProtKB-SubCell"/>
</dbReference>
<dbReference type="GO" id="GO:0005768">
    <property type="term" value="C:endosome"/>
    <property type="evidence" value="ECO:0000318"/>
    <property type="project" value="GO_Central"/>
</dbReference>
<dbReference type="GO" id="GO:0098978">
    <property type="term" value="C:glutamatergic synapse"/>
    <property type="evidence" value="ECO:0000266"/>
    <property type="project" value="RGD"/>
</dbReference>
<dbReference type="GO" id="GO:0005886">
    <property type="term" value="C:plasma membrane"/>
    <property type="evidence" value="ECO:0000250"/>
    <property type="project" value="UniProtKB"/>
</dbReference>
<dbReference type="GO" id="GO:0055038">
    <property type="term" value="C:recycling endosome membrane"/>
    <property type="evidence" value="ECO:0000266"/>
    <property type="project" value="RGD"/>
</dbReference>
<dbReference type="GO" id="GO:0032587">
    <property type="term" value="C:ruffle membrane"/>
    <property type="evidence" value="ECO:0007669"/>
    <property type="project" value="UniProtKB-SubCell"/>
</dbReference>
<dbReference type="GO" id="GO:0008092">
    <property type="term" value="F:cytoskeletal protein binding"/>
    <property type="evidence" value="ECO:0000266"/>
    <property type="project" value="RGD"/>
</dbReference>
<dbReference type="GO" id="GO:0042802">
    <property type="term" value="F:identical protein binding"/>
    <property type="evidence" value="ECO:0000266"/>
    <property type="project" value="RGD"/>
</dbReference>
<dbReference type="GO" id="GO:0008289">
    <property type="term" value="F:lipid binding"/>
    <property type="evidence" value="ECO:0000266"/>
    <property type="project" value="RGD"/>
</dbReference>
<dbReference type="GO" id="GO:0070300">
    <property type="term" value="F:phosphatidic acid binding"/>
    <property type="evidence" value="ECO:0000250"/>
    <property type="project" value="UniProtKB"/>
</dbReference>
<dbReference type="GO" id="GO:0005543">
    <property type="term" value="F:phospholipid binding"/>
    <property type="evidence" value="ECO:0000318"/>
    <property type="project" value="GO_Central"/>
</dbReference>
<dbReference type="GO" id="GO:0030036">
    <property type="term" value="P:actin cytoskeleton organization"/>
    <property type="evidence" value="ECO:0007669"/>
    <property type="project" value="InterPro"/>
</dbReference>
<dbReference type="GO" id="GO:0070836">
    <property type="term" value="P:caveola assembly"/>
    <property type="evidence" value="ECO:0000250"/>
    <property type="project" value="UniProtKB"/>
</dbReference>
<dbReference type="GO" id="GO:0072584">
    <property type="term" value="P:caveolin-mediated endocytosis"/>
    <property type="evidence" value="ECO:0000250"/>
    <property type="project" value="UniProtKB"/>
</dbReference>
<dbReference type="GO" id="GO:0048858">
    <property type="term" value="P:cell projection morphogenesis"/>
    <property type="evidence" value="ECO:0000250"/>
    <property type="project" value="UniProtKB"/>
</dbReference>
<dbReference type="GO" id="GO:0007010">
    <property type="term" value="P:cytoskeleton organization"/>
    <property type="evidence" value="ECO:0000318"/>
    <property type="project" value="GO_Central"/>
</dbReference>
<dbReference type="GO" id="GO:0050804">
    <property type="term" value="P:modulation of chemical synaptic transmission"/>
    <property type="evidence" value="ECO:0000266"/>
    <property type="project" value="RGD"/>
</dbReference>
<dbReference type="GO" id="GO:0045806">
    <property type="term" value="P:negative regulation of endocytosis"/>
    <property type="evidence" value="ECO:0000266"/>
    <property type="project" value="RGD"/>
</dbReference>
<dbReference type="GO" id="GO:0097320">
    <property type="term" value="P:plasma membrane tubulation"/>
    <property type="evidence" value="ECO:0000250"/>
    <property type="project" value="UniProtKB"/>
</dbReference>
<dbReference type="GO" id="GO:0036010">
    <property type="term" value="P:protein localization to endosome"/>
    <property type="evidence" value="ECO:0000266"/>
    <property type="project" value="RGD"/>
</dbReference>
<dbReference type="GO" id="GO:0030100">
    <property type="term" value="P:regulation of endocytosis"/>
    <property type="evidence" value="ECO:0000318"/>
    <property type="project" value="GO_Central"/>
</dbReference>
<dbReference type="CDD" id="cd07679">
    <property type="entry name" value="F-BAR_PACSIN2"/>
    <property type="match status" value="1"/>
</dbReference>
<dbReference type="CDD" id="cd11998">
    <property type="entry name" value="SH3_PACSIN1-2"/>
    <property type="match status" value="1"/>
</dbReference>
<dbReference type="FunFam" id="2.30.30.40:FF:000014">
    <property type="entry name" value="Kinase C and casein kinase substrate in neurons protein"/>
    <property type="match status" value="1"/>
</dbReference>
<dbReference type="FunFam" id="1.20.1270.60:FF:000205">
    <property type="entry name" value="Protein kinase C and casein kinase substrate in neurons protein 1"/>
    <property type="match status" value="1"/>
</dbReference>
<dbReference type="Gene3D" id="1.20.1270.60">
    <property type="entry name" value="Arfaptin homology (AH) domain/BAR domain"/>
    <property type="match status" value="1"/>
</dbReference>
<dbReference type="Gene3D" id="2.30.30.40">
    <property type="entry name" value="SH3 Domains"/>
    <property type="match status" value="1"/>
</dbReference>
<dbReference type="InterPro" id="IPR027267">
    <property type="entry name" value="AH/BAR_dom_sf"/>
</dbReference>
<dbReference type="InterPro" id="IPR031160">
    <property type="entry name" value="F_BAR"/>
</dbReference>
<dbReference type="InterPro" id="IPR001060">
    <property type="entry name" value="FCH_dom"/>
</dbReference>
<dbReference type="InterPro" id="IPR035743">
    <property type="entry name" value="PACSIN1/PACSIN2_SH3"/>
</dbReference>
<dbReference type="InterPro" id="IPR037453">
    <property type="entry name" value="PACSIN2_F-BAR"/>
</dbReference>
<dbReference type="InterPro" id="IPR036028">
    <property type="entry name" value="SH3-like_dom_sf"/>
</dbReference>
<dbReference type="InterPro" id="IPR001452">
    <property type="entry name" value="SH3_domain"/>
</dbReference>
<dbReference type="PANTHER" id="PTHR23065">
    <property type="entry name" value="PROLINE-SERINE-THREONINE PHOSPHATASE INTERACTING PROTEIN 1"/>
    <property type="match status" value="1"/>
</dbReference>
<dbReference type="PANTHER" id="PTHR23065:SF14">
    <property type="entry name" value="PROTEIN KINASE C AND CASEIN KINASE SUBSTRATE IN NEURONS PROTEIN 2"/>
    <property type="match status" value="1"/>
</dbReference>
<dbReference type="Pfam" id="PF00611">
    <property type="entry name" value="FCH"/>
    <property type="match status" value="1"/>
</dbReference>
<dbReference type="Pfam" id="PF14604">
    <property type="entry name" value="SH3_9"/>
    <property type="match status" value="1"/>
</dbReference>
<dbReference type="PRINTS" id="PR00452">
    <property type="entry name" value="SH3DOMAIN"/>
</dbReference>
<dbReference type="SMART" id="SM00055">
    <property type="entry name" value="FCH"/>
    <property type="match status" value="1"/>
</dbReference>
<dbReference type="SMART" id="SM00326">
    <property type="entry name" value="SH3"/>
    <property type="match status" value="1"/>
</dbReference>
<dbReference type="SUPFAM" id="SSF103657">
    <property type="entry name" value="BAR/IMD domain-like"/>
    <property type="match status" value="1"/>
</dbReference>
<dbReference type="SUPFAM" id="SSF50044">
    <property type="entry name" value="SH3-domain"/>
    <property type="match status" value="1"/>
</dbReference>
<dbReference type="PROSITE" id="PS51741">
    <property type="entry name" value="F_BAR"/>
    <property type="match status" value="1"/>
</dbReference>
<dbReference type="PROSITE" id="PS50002">
    <property type="entry name" value="SH3"/>
    <property type="match status" value="1"/>
</dbReference>
<organism>
    <name type="scientific">Rattus norvegicus</name>
    <name type="common">Rat</name>
    <dbReference type="NCBI Taxonomy" id="10116"/>
    <lineage>
        <taxon>Eukaryota</taxon>
        <taxon>Metazoa</taxon>
        <taxon>Chordata</taxon>
        <taxon>Craniata</taxon>
        <taxon>Vertebrata</taxon>
        <taxon>Euteleostomi</taxon>
        <taxon>Mammalia</taxon>
        <taxon>Eutheria</taxon>
        <taxon>Euarchontoglires</taxon>
        <taxon>Glires</taxon>
        <taxon>Rodentia</taxon>
        <taxon>Myomorpha</taxon>
        <taxon>Muroidea</taxon>
        <taxon>Muridae</taxon>
        <taxon>Murinae</taxon>
        <taxon>Rattus</taxon>
    </lineage>
</organism>
<accession>Q9QY17</accession>
<accession>Q9QY18</accession>
<accession>Q9QY19</accession>
<accession>Q9QY20</accession>
<reference key="1">
    <citation type="journal article" date="2000" name="J. Cell Biol.">
        <title>Syndapin isoforms participate in receptor-mediated endocytosis and actin organization.</title>
        <authorList>
            <person name="Qualmann B."/>
            <person name="Kelly R.B."/>
        </authorList>
    </citation>
    <scope>NUCLEOTIDE SEQUENCE [MRNA] (ISOFORMS 1; 2; 3 AND 4)</scope>
    <scope>FUNCTION</scope>
    <scope>INTERACTION WITH DNM1; SYN1; SYNJ1 AND WASL</scope>
    <scope>SUBCELLULAR LOCATION</scope>
    <scope>TISSUE SPECIFICITY</scope>
    <source>
        <strain>Sprague-Dawley</strain>
        <tissue>Brain</tissue>
    </source>
</reference>
<reference key="2">
    <citation type="journal article" date="2012" name="Histochem. Cell Biol.">
        <title>Ultrastructural freeze-fracture immunolabeling identifies plasma membrane-localized syndapin II as a crucial factor in shaping caveolae.</title>
        <authorList>
            <person name="Koch D."/>
            <person name="Westermann M."/>
            <person name="Kessels M.M."/>
            <person name="Qualmann B."/>
        </authorList>
    </citation>
    <scope>SUBCELLULAR LOCATION</scope>
    <scope>DISRUPTION PHENOTYPE</scope>
    <scope>FUNCTION</scope>
</reference>
<reference key="3">
    <citation type="journal article" date="2012" name="Nat. Commun.">
        <title>Quantitative maps of protein phosphorylation sites across 14 different rat organs and tissues.</title>
        <authorList>
            <person name="Lundby A."/>
            <person name="Secher A."/>
            <person name="Lage K."/>
            <person name="Nordsborg N.B."/>
            <person name="Dmytriyev A."/>
            <person name="Lundby C."/>
            <person name="Olsen J.V."/>
        </authorList>
    </citation>
    <scope>PHOSPHORYLATION [LARGE SCALE ANALYSIS] AT SER-401</scope>
    <scope>IDENTIFICATION BY MASS SPECTROMETRY [LARGE SCALE ANALYSIS]</scope>
</reference>
<gene>
    <name type="primary">Pacsin2</name>
</gene>
<protein>
    <recommendedName>
        <fullName>Protein kinase C and casein kinase substrate in neurons 2 protein</fullName>
    </recommendedName>
    <alternativeName>
        <fullName>Synaptic dynamin-associated protein II</fullName>
    </alternativeName>
    <alternativeName>
        <fullName>Syndapin-2</fullName>
    </alternativeName>
    <alternativeName>
        <fullName>Syndapin-II</fullName>
        <shortName>SdpII</shortName>
    </alternativeName>
</protein>
<proteinExistence type="evidence at protein level"/>
<keyword id="KW-0007">Acetylation</keyword>
<keyword id="KW-0025">Alternative splicing</keyword>
<keyword id="KW-0965">Cell junction</keyword>
<keyword id="KW-1003">Cell membrane</keyword>
<keyword id="KW-0966">Cell projection</keyword>
<keyword id="KW-0175">Coiled coil</keyword>
<keyword id="KW-0963">Cytoplasm</keyword>
<keyword id="KW-0968">Cytoplasmic vesicle</keyword>
<keyword id="KW-0206">Cytoskeleton</keyword>
<keyword id="KW-0254">Endocytosis</keyword>
<keyword id="KW-0967">Endosome</keyword>
<keyword id="KW-0446">Lipid-binding</keyword>
<keyword id="KW-0472">Membrane</keyword>
<keyword id="KW-0597">Phosphoprotein</keyword>
<keyword id="KW-1185">Reference proteome</keyword>
<keyword id="KW-0728">SH3 domain</keyword>
<comment type="function">
    <text evidence="3 7 8">Regulates the morphogenesis and endocytosis of caveolae (PubMed:22718246). Lipid-binding protein that is able to promote the tubulation of the phosphatidic acid-containing membranes it preferentially binds. Plays a role in intracellular vesicle-mediated transport. Involved in the endocytosis of cell-surface receptors like the EGF receptor, contributing to its internalization in the absence of EGF stimulus. Facilitates endothelial front-rear polarity during migration by recruiting EHD4 and MICALL1 to asymmetric adherens junctions between leader and follower cells (By similarity).</text>
</comment>
<comment type="subunit">
    <text evidence="2 3 7">Homodimer (By similarity). May form heterooligomers with other PACSINs (By similarity). Interacts (via NPF motifs) with EHD1 (via EH domain) (By similarity). Interacts with EHD3 (By similarity). Interacts (via the SH3 domain) with MICALL1 (By similarity). Interacts with RAC1 (By similarity). Interacts (via SH3 domain) with DNM1, SYN1, SYNJ1 and WASL (PubMed:10704453). Interacts with CAV1 (By similarity). Interacts with TRPV4 (By similarity). Forms a complex with EHD4 and MICALL1; the complex controls CDH5 trafficking and coordinates angiogenesis (By similarity).</text>
</comment>
<comment type="interaction">
    <interactant intactId="EBI-491201">
        <id>Q9QY17</id>
    </interactant>
    <interactant intactId="EBI-492911">
        <id>Q641Z6</id>
        <label>Ehd1</label>
    </interactant>
    <organismsDiffer>false</organismsDiffer>
    <experiments>2</experiments>
</comment>
<comment type="interaction">
    <interactant intactId="EBI-491201">
        <id>Q9QY17</id>
    </interactant>
    <interactant intactId="EBI-1550138">
        <id>Q5NBX1</id>
        <label>Cobl</label>
    </interactant>
    <organismsDiffer>true</organismsDiffer>
    <experiments>4</experiments>
</comment>
<comment type="interaction">
    <interactant intactId="EBI-491201">
        <id>Q9QY17</id>
    </interactant>
    <interactant intactId="EBI-491022">
        <id>Q9EQP2</id>
        <label>Ehd4</label>
    </interactant>
    <organismsDiffer>true</organismsDiffer>
    <experiments>4</experiments>
</comment>
<comment type="interaction">
    <interactant intactId="EBI-491201">
        <id>Q9QY17</id>
    </interactant>
    <interactant intactId="EBI-745080">
        <id>Q9NZQ3</id>
        <label>NCKIPSD</label>
    </interactant>
    <organismsDiffer>true</organismsDiffer>
    <experiments>2</experiments>
</comment>
<comment type="interaction">
    <interactant intactId="EBI-491201">
        <id>Q9QY17</id>
    </interactant>
    <interactant intactId="EBI-2622029">
        <id>P18545</id>
        <label>PDE6G</label>
    </interactant>
    <organismsDiffer>true</organismsDiffer>
    <experiments>4</experiments>
</comment>
<comment type="subcellular location">
    <subcellularLocation>
        <location evidence="7">Cytoplasm</location>
    </subcellularLocation>
    <subcellularLocation>
        <location evidence="3">Cytoplasm</location>
        <location evidence="3">Cytoskeleton</location>
    </subcellularLocation>
    <subcellularLocation>
        <location evidence="7">Cytoplasmic vesicle membrane</location>
        <topology evidence="7">Peripheral membrane protein</topology>
        <orientation evidence="7">Cytoplasmic side</orientation>
    </subcellularLocation>
    <subcellularLocation>
        <location evidence="3">Cell projection</location>
        <location evidence="3">Ruffle membrane</location>
        <topology evidence="3">Peripheral membrane protein</topology>
        <orientation evidence="3">Cytoplasmic side</orientation>
    </subcellularLocation>
    <subcellularLocation>
        <location evidence="3">Early endosome</location>
    </subcellularLocation>
    <subcellularLocation>
        <location evidence="1">Recycling endosome membrane</location>
    </subcellularLocation>
    <subcellularLocation>
        <location evidence="8">Cell membrane</location>
        <topology evidence="3">Peripheral membrane protein</topology>
        <orientation evidence="3">Cytoplasmic side</orientation>
    </subcellularLocation>
    <subcellularLocation>
        <location evidence="2">Cell projection</location>
    </subcellularLocation>
    <subcellularLocation>
        <location evidence="8">Membrane</location>
        <location evidence="8">Caveola</location>
    </subcellularLocation>
    <subcellularLocation>
        <location evidence="3">Cell junction</location>
        <location evidence="3">Adherens junction</location>
    </subcellularLocation>
    <text evidence="3">Detected at the neck of flask-shaped caveolae. Localization to tubular recycling endosomes probably requires interaction with MICALL1 and EHD1.</text>
</comment>
<comment type="alternative products">
    <event type="alternative splicing"/>
    <isoform>
        <id>Q9QY17-1</id>
        <name>1</name>
        <name>Aa</name>
        <name>SdpII-l</name>
        <sequence type="displayed"/>
    </isoform>
    <isoform>
        <id>Q9QY17-2</id>
        <name>2</name>
        <name>Ab</name>
        <sequence type="described" ref="VSP_004519"/>
    </isoform>
    <isoform>
        <id>Q9QY17-3</id>
        <name>3</name>
        <name>Ba</name>
        <sequence type="described" ref="VSP_004518"/>
    </isoform>
    <isoform>
        <id>Q9QY17-4</id>
        <name>4</name>
        <name>Bb</name>
        <name>SdpII-s</name>
        <sequence type="described" ref="VSP_004518 VSP_004519"/>
    </isoform>
</comment>
<comment type="tissue specificity">
    <text evidence="7">Widely expressed (at protein level). Isoforms 1/3 are predominantly expressed in heart and in PC-12 cells, a pheochromocytoma cell line (at protein level). Isoforms 2/4 are widely expressed with highest levels in muscle, testis and brain (at protein level).</text>
</comment>
<comment type="domain">
    <text evidence="1">The F-BAR domain forms a coiled coil and mediates membrane-binding and membrane tubulation. In the autoinhibited conformation, interaction with the SH3 domain inhibits membrane tubulation mediated by the F-BAR domain (By similarity).</text>
</comment>
<comment type="PTM">
    <text evidence="3">Phosphorylated by casein kinase 2 (CK2) and protein kinase C (PKC). Phosphorylation by PKC probably decreases the membrane binding and tubulation capacities of PACSIN2, thereby modulating the lifetime of caveolae (By similarity).</text>
</comment>
<comment type="disruption phenotype">
    <text evidence="8">Reduces the density of caveolae.</text>
</comment>
<comment type="similarity">
    <text evidence="10">Belongs to the PACSIN family.</text>
</comment>
<evidence type="ECO:0000250" key="1"/>
<evidence type="ECO:0000250" key="2">
    <source>
        <dbReference type="UniProtKB" id="Q9UNF0"/>
    </source>
</evidence>
<evidence type="ECO:0000250" key="3">
    <source>
        <dbReference type="UniProtKB" id="Q9WVE8"/>
    </source>
</evidence>
<evidence type="ECO:0000255" key="4">
    <source>
        <dbReference type="PROSITE-ProRule" id="PRU00192"/>
    </source>
</evidence>
<evidence type="ECO:0000255" key="5">
    <source>
        <dbReference type="PROSITE-ProRule" id="PRU01077"/>
    </source>
</evidence>
<evidence type="ECO:0000256" key="6">
    <source>
        <dbReference type="SAM" id="MobiDB-lite"/>
    </source>
</evidence>
<evidence type="ECO:0000269" key="7">
    <source>
    </source>
</evidence>
<evidence type="ECO:0000269" key="8">
    <source>
    </source>
</evidence>
<evidence type="ECO:0000303" key="9">
    <source>
    </source>
</evidence>
<evidence type="ECO:0000305" key="10"/>
<evidence type="ECO:0007744" key="11">
    <source>
    </source>
</evidence>
<sequence length="488" mass="55978">MSVTYDDSVGVEVSSDSFWEVGNYKRTVKRIDDGHRLCGDLMNCLHERARIEKAYAQQLTEWARRWRQLVEKGPQYGTVEKAWMAVMSEAERVSELHLEVKASLMNEDFEKIKNWQKEAFHKQMMGGFKETKEAEDGFRKAQKPWAKKLKEVDAAKKAHHTACKEEKLAVSREANSKADPSLNPEQLKKLQDKIEKCKQDVLKTKDKYEKALKELDQTTPQYMENMEQVFEQCQQFEEKRLRFFREVLLEVQKHLDLSNVASYKGIYRELEQSIKAADAVEDLRWFRANHGPGMAMNWPQFEDEEWSADLNRTLSRREKKKAADGVTLTGINQTGDQSGQNKPSSNLSVPSNPAQSTQLQSSYNPFEDEDDTGSSVSEKEDIKAKNVSSYEKTQNYPADWSDDESNNPFSSTDANGDSNPFDEDTTSGTEVRVRALYDYEGQEHDELSFKAGDELTKIEDEDEQGWCKGRLDSGQVGLYPANYVEAIQ</sequence>
<feature type="chain" id="PRO_0000161797" description="Protein kinase C and casein kinase substrate in neurons 2 protein">
    <location>
        <begin position="1"/>
        <end position="488"/>
    </location>
</feature>
<feature type="domain" description="F-BAR" evidence="5">
    <location>
        <begin position="11"/>
        <end position="282"/>
    </location>
</feature>
<feature type="domain" description="SH3" evidence="4">
    <location>
        <begin position="428"/>
        <end position="488"/>
    </location>
</feature>
<feature type="region of interest" description="Disordered" evidence="6">
    <location>
        <begin position="163"/>
        <end position="183"/>
    </location>
</feature>
<feature type="region of interest" description="Disordered" evidence="6">
    <location>
        <begin position="316"/>
        <end position="429"/>
    </location>
</feature>
<feature type="coiled-coil region" evidence="1">
    <location>
        <begin position="25"/>
        <end position="274"/>
    </location>
</feature>
<feature type="short sequence motif" description="NPF1">
    <location>
        <begin position="364"/>
        <end position="366"/>
    </location>
</feature>
<feature type="short sequence motif" description="NPF2">
    <location>
        <begin position="407"/>
        <end position="409"/>
    </location>
</feature>
<feature type="short sequence motif" description="NPF3">
    <location>
        <begin position="419"/>
        <end position="421"/>
    </location>
</feature>
<feature type="compositionally biased region" description="Basic and acidic residues" evidence="6">
    <location>
        <begin position="163"/>
        <end position="176"/>
    </location>
</feature>
<feature type="compositionally biased region" description="Polar residues" evidence="6">
    <location>
        <begin position="329"/>
        <end position="364"/>
    </location>
</feature>
<feature type="compositionally biased region" description="Polar residues" evidence="6">
    <location>
        <begin position="386"/>
        <end position="396"/>
    </location>
</feature>
<feature type="compositionally biased region" description="Polar residues" evidence="6">
    <location>
        <begin position="406"/>
        <end position="418"/>
    </location>
</feature>
<feature type="modified residue" description="N6-acetyllysine" evidence="3">
    <location>
        <position position="53"/>
    </location>
</feature>
<feature type="modified residue" description="Phosphoserine" evidence="2">
    <location>
        <position position="273"/>
    </location>
</feature>
<feature type="modified residue" description="Phosphoserine; by PKC" evidence="3">
    <location>
        <position position="315"/>
    </location>
</feature>
<feature type="modified residue" description="Phosphoserine; by IKKB" evidence="3">
    <location>
        <position position="375"/>
    </location>
</feature>
<feature type="modified residue" description="Phosphoserine" evidence="11">
    <location>
        <position position="401"/>
    </location>
</feature>
<feature type="modified residue" description="Phosphoserine" evidence="2">
    <location>
        <position position="448"/>
    </location>
</feature>
<feature type="splice variant" id="VSP_004518" description="In isoform 3 and isoform 4." evidence="9">
    <location>
        <begin position="302"/>
        <end position="303"/>
    </location>
</feature>
<feature type="splice variant" id="VSP_004519" description="In isoform 2 and isoform 4." evidence="9">
    <location>
        <begin position="346"/>
        <end position="386"/>
    </location>
</feature>